<keyword id="KW-0378">Hydrolase</keyword>
<keyword id="KW-1185">Reference proteome</keyword>
<sequence length="193" mass="21994">MTAVCLVRHGETDWNLQQKCQGKTDIPLNATGERQARETGEYVKDFSWDIIVTSPLKRAKRTAEIINEYLHLPIVEMDDFKERDYGDAEGMPLEERTKRYPDNIYPNMETLEELTDRLMGGLAKVNQAYPNKKVLIVAHGAAIHALLTEISGGDPELQSTRLVNACLSNIEFAEEKWRIKDYNINSHLSGFIK</sequence>
<proteinExistence type="inferred from homology"/>
<dbReference type="EC" id="3.1.3.-"/>
<dbReference type="EMBL" id="Y14084">
    <property type="protein sequence ID" value="CAA74541.1"/>
    <property type="molecule type" value="Genomic_DNA"/>
</dbReference>
<dbReference type="EMBL" id="AL009126">
    <property type="protein sequence ID" value="CAB12874.1"/>
    <property type="molecule type" value="Genomic_DNA"/>
</dbReference>
<dbReference type="PIR" id="G69831">
    <property type="entry name" value="G69831"/>
</dbReference>
<dbReference type="RefSeq" id="NP_388915.1">
    <property type="nucleotide sequence ID" value="NC_000964.3"/>
</dbReference>
<dbReference type="RefSeq" id="WP_003233157.1">
    <property type="nucleotide sequence ID" value="NZ_OZ025638.1"/>
</dbReference>
<dbReference type="SMR" id="O07617"/>
<dbReference type="FunCoup" id="O07617">
    <property type="interactions" value="544"/>
</dbReference>
<dbReference type="STRING" id="224308.BSU10340"/>
<dbReference type="PaxDb" id="224308-BSU10340"/>
<dbReference type="EnsemblBacteria" id="CAB12874">
    <property type="protein sequence ID" value="CAB12874"/>
    <property type="gene ID" value="BSU_10340"/>
</dbReference>
<dbReference type="GeneID" id="939773"/>
<dbReference type="KEGG" id="bsu:BSU10340"/>
<dbReference type="PATRIC" id="fig|224308.179.peg.1112"/>
<dbReference type="eggNOG" id="COG0406">
    <property type="taxonomic scope" value="Bacteria"/>
</dbReference>
<dbReference type="InParanoid" id="O07617"/>
<dbReference type="OrthoDB" id="9782128at2"/>
<dbReference type="PhylomeDB" id="O07617"/>
<dbReference type="BioCyc" id="BSUB:BSU10340-MONOMER"/>
<dbReference type="Proteomes" id="UP000001570">
    <property type="component" value="Chromosome"/>
</dbReference>
<dbReference type="GO" id="GO:0005737">
    <property type="term" value="C:cytoplasm"/>
    <property type="evidence" value="ECO:0000318"/>
    <property type="project" value="GO_Central"/>
</dbReference>
<dbReference type="GO" id="GO:0016791">
    <property type="term" value="F:phosphatase activity"/>
    <property type="evidence" value="ECO:0000318"/>
    <property type="project" value="GO_Central"/>
</dbReference>
<dbReference type="CDD" id="cd07067">
    <property type="entry name" value="HP_PGM_like"/>
    <property type="match status" value="1"/>
</dbReference>
<dbReference type="Gene3D" id="3.40.50.1240">
    <property type="entry name" value="Phosphoglycerate mutase-like"/>
    <property type="match status" value="1"/>
</dbReference>
<dbReference type="InterPro" id="IPR013078">
    <property type="entry name" value="His_Pase_superF_clade-1"/>
</dbReference>
<dbReference type="InterPro" id="IPR029033">
    <property type="entry name" value="His_PPase_superfam"/>
</dbReference>
<dbReference type="InterPro" id="IPR001345">
    <property type="entry name" value="PG/BPGM_mutase_AS"/>
</dbReference>
<dbReference type="InterPro" id="IPR050275">
    <property type="entry name" value="PGM_Phosphatase"/>
</dbReference>
<dbReference type="PANTHER" id="PTHR48100:SF59">
    <property type="entry name" value="ADENOSYLCOBALAMIN_ALPHA-RIBAZOLE PHOSPHATASE"/>
    <property type="match status" value="1"/>
</dbReference>
<dbReference type="PANTHER" id="PTHR48100">
    <property type="entry name" value="BROAD-SPECIFICITY PHOSPHATASE YOR283W-RELATED"/>
    <property type="match status" value="1"/>
</dbReference>
<dbReference type="Pfam" id="PF00300">
    <property type="entry name" value="His_Phos_1"/>
    <property type="match status" value="1"/>
</dbReference>
<dbReference type="SMART" id="SM00855">
    <property type="entry name" value="PGAM"/>
    <property type="match status" value="1"/>
</dbReference>
<dbReference type="SUPFAM" id="SSF53254">
    <property type="entry name" value="Phosphoglycerate mutase-like"/>
    <property type="match status" value="1"/>
</dbReference>
<dbReference type="PROSITE" id="PS00175">
    <property type="entry name" value="PG_MUTASE"/>
    <property type="match status" value="1"/>
</dbReference>
<reference key="1">
    <citation type="submission" date="1997-06" db="EMBL/GenBank/DDBJ databases">
        <authorList>
            <person name="Noback M.A."/>
            <person name="Terpstra P."/>
            <person name="Holsappel S."/>
            <person name="Venema G."/>
            <person name="Bron S."/>
        </authorList>
    </citation>
    <scope>NUCLEOTIDE SEQUENCE [GENOMIC DNA]</scope>
    <source>
        <strain>168</strain>
    </source>
</reference>
<reference key="2">
    <citation type="journal article" date="1997" name="Nature">
        <title>The complete genome sequence of the Gram-positive bacterium Bacillus subtilis.</title>
        <authorList>
            <person name="Kunst F."/>
            <person name="Ogasawara N."/>
            <person name="Moszer I."/>
            <person name="Albertini A.M."/>
            <person name="Alloni G."/>
            <person name="Azevedo V."/>
            <person name="Bertero M.G."/>
            <person name="Bessieres P."/>
            <person name="Bolotin A."/>
            <person name="Borchert S."/>
            <person name="Borriss R."/>
            <person name="Boursier L."/>
            <person name="Brans A."/>
            <person name="Braun M."/>
            <person name="Brignell S.C."/>
            <person name="Bron S."/>
            <person name="Brouillet S."/>
            <person name="Bruschi C.V."/>
            <person name="Caldwell B."/>
            <person name="Capuano V."/>
            <person name="Carter N.M."/>
            <person name="Choi S.-K."/>
            <person name="Codani J.-J."/>
            <person name="Connerton I.F."/>
            <person name="Cummings N.J."/>
            <person name="Daniel R.A."/>
            <person name="Denizot F."/>
            <person name="Devine K.M."/>
            <person name="Duesterhoeft A."/>
            <person name="Ehrlich S.D."/>
            <person name="Emmerson P.T."/>
            <person name="Entian K.-D."/>
            <person name="Errington J."/>
            <person name="Fabret C."/>
            <person name="Ferrari E."/>
            <person name="Foulger D."/>
            <person name="Fritz C."/>
            <person name="Fujita M."/>
            <person name="Fujita Y."/>
            <person name="Fuma S."/>
            <person name="Galizzi A."/>
            <person name="Galleron N."/>
            <person name="Ghim S.-Y."/>
            <person name="Glaser P."/>
            <person name="Goffeau A."/>
            <person name="Golightly E.J."/>
            <person name="Grandi G."/>
            <person name="Guiseppi G."/>
            <person name="Guy B.J."/>
            <person name="Haga K."/>
            <person name="Haiech J."/>
            <person name="Harwood C.R."/>
            <person name="Henaut A."/>
            <person name="Hilbert H."/>
            <person name="Holsappel S."/>
            <person name="Hosono S."/>
            <person name="Hullo M.-F."/>
            <person name="Itaya M."/>
            <person name="Jones L.-M."/>
            <person name="Joris B."/>
            <person name="Karamata D."/>
            <person name="Kasahara Y."/>
            <person name="Klaerr-Blanchard M."/>
            <person name="Klein C."/>
            <person name="Kobayashi Y."/>
            <person name="Koetter P."/>
            <person name="Koningstein G."/>
            <person name="Krogh S."/>
            <person name="Kumano M."/>
            <person name="Kurita K."/>
            <person name="Lapidus A."/>
            <person name="Lardinois S."/>
            <person name="Lauber J."/>
            <person name="Lazarevic V."/>
            <person name="Lee S.-M."/>
            <person name="Levine A."/>
            <person name="Liu H."/>
            <person name="Masuda S."/>
            <person name="Mauel C."/>
            <person name="Medigue C."/>
            <person name="Medina N."/>
            <person name="Mellado R.P."/>
            <person name="Mizuno M."/>
            <person name="Moestl D."/>
            <person name="Nakai S."/>
            <person name="Noback M."/>
            <person name="Noone D."/>
            <person name="O'Reilly M."/>
            <person name="Ogawa K."/>
            <person name="Ogiwara A."/>
            <person name="Oudega B."/>
            <person name="Park S.-H."/>
            <person name="Parro V."/>
            <person name="Pohl T.M."/>
            <person name="Portetelle D."/>
            <person name="Porwollik S."/>
            <person name="Prescott A.M."/>
            <person name="Presecan E."/>
            <person name="Pujic P."/>
            <person name="Purnelle B."/>
            <person name="Rapoport G."/>
            <person name="Rey M."/>
            <person name="Reynolds S."/>
            <person name="Rieger M."/>
            <person name="Rivolta C."/>
            <person name="Rocha E."/>
            <person name="Roche B."/>
            <person name="Rose M."/>
            <person name="Sadaie Y."/>
            <person name="Sato T."/>
            <person name="Scanlan E."/>
            <person name="Schleich S."/>
            <person name="Schroeter R."/>
            <person name="Scoffone F."/>
            <person name="Sekiguchi J."/>
            <person name="Sekowska A."/>
            <person name="Seror S.J."/>
            <person name="Serror P."/>
            <person name="Shin B.-S."/>
            <person name="Soldo B."/>
            <person name="Sorokin A."/>
            <person name="Tacconi E."/>
            <person name="Takagi T."/>
            <person name="Takahashi H."/>
            <person name="Takemaru K."/>
            <person name="Takeuchi M."/>
            <person name="Tamakoshi A."/>
            <person name="Tanaka T."/>
            <person name="Terpstra P."/>
            <person name="Tognoni A."/>
            <person name="Tosato V."/>
            <person name="Uchiyama S."/>
            <person name="Vandenbol M."/>
            <person name="Vannier F."/>
            <person name="Vassarotti A."/>
            <person name="Viari A."/>
            <person name="Wambutt R."/>
            <person name="Wedler E."/>
            <person name="Wedler H."/>
            <person name="Weitzenegger T."/>
            <person name="Winters P."/>
            <person name="Wipat A."/>
            <person name="Yamamoto H."/>
            <person name="Yamane K."/>
            <person name="Yasumoto K."/>
            <person name="Yata K."/>
            <person name="Yoshida K."/>
            <person name="Yoshikawa H.-F."/>
            <person name="Zumstein E."/>
            <person name="Yoshikawa H."/>
            <person name="Danchin A."/>
        </authorList>
    </citation>
    <scope>NUCLEOTIDE SEQUENCE [LARGE SCALE GENOMIC DNA]</scope>
    <source>
        <strain>168</strain>
    </source>
</reference>
<reference key="3">
    <citation type="journal article" date="2000" name="J. Bacteriol.">
        <title>Analysis of the function of a putative 2,3-diphosphoglyceric acid-dependent phosphoglycerate mutase from Bacillus subtilis.</title>
        <authorList>
            <person name="Pearson C.L."/>
            <person name="Loshon C.A."/>
            <person name="Pedersen L.B."/>
            <person name="Setlow B."/>
            <person name="Setlow P."/>
        </authorList>
    </citation>
    <scope>FUNCTION</scope>
    <scope>DISRUPTION PHENOTYPE</scope>
    <source>
        <strain>168</strain>
    </source>
</reference>
<reference key="4">
    <citation type="journal article" date="2007" name="Appl. Environ. Microbiol.">
        <title>Identification of isopentenol biosynthetic genes from Bacillus subtilis by a screening method based on isoprenoid precursor toxicity.</title>
        <authorList>
            <person name="Withers S.T."/>
            <person name="Gottlieb S.S."/>
            <person name="Lieu B."/>
            <person name="Newman J.D."/>
            <person name="Keasling J.D."/>
        </authorList>
    </citation>
    <scope>FUNCTION</scope>
    <source>
        <strain>168 / Marburg / ATCC 6051 / DSM 10 / JCM 1465 / NBRC 13719 / NCIMB 3610 / NRRL NRS-744 / VKM B-501</strain>
    </source>
</reference>
<protein>
    <recommendedName>
        <fullName>Uncharacterized phosphatase PhoE</fullName>
        <ecNumber>3.1.3.-</ecNumber>
    </recommendedName>
</protein>
<gene>
    <name type="primary">phoE</name>
    <name type="synonym">yhfR</name>
    <name type="ordered locus">BSU10340</name>
</gene>
<accession>O07617</accession>
<accession>Q796T5</accession>
<name>PHOE_BACSU</name>
<comment type="function">
    <text evidence="3 4">Phosphatase with broad substrate specificity. Does not have phosphoglycerate mutase activity.</text>
</comment>
<comment type="disruption phenotype">
    <text evidence="3">No visible phenotype.</text>
</comment>
<comment type="similarity">
    <text evidence="5">Belongs to the phosphoglycerate mutase family. GpmB subfamily.</text>
</comment>
<comment type="caution">
    <text evidence="5">In contrast to other members of the family, has no phosphoglycerate mutase activity.</text>
</comment>
<feature type="chain" id="PRO_0000360623" description="Uncharacterized phosphatase PhoE">
    <location>
        <begin position="1"/>
        <end position="193"/>
    </location>
</feature>
<feature type="active site" description="Tele-phosphohistidine intermediate" evidence="1">
    <location>
        <position position="9"/>
    </location>
</feature>
<feature type="active site" description="Proton donor/acceptor" evidence="1">
    <location>
        <position position="82"/>
    </location>
</feature>
<feature type="binding site" evidence="2">
    <location>
        <position position="8"/>
    </location>
    <ligand>
        <name>substrate</name>
    </ligand>
</feature>
<feature type="binding site" evidence="2">
    <location>
        <position position="15"/>
    </location>
    <ligand>
        <name>substrate</name>
    </ligand>
</feature>
<feature type="binding site" evidence="2">
    <location>
        <position position="21"/>
    </location>
    <ligand>
        <name>substrate</name>
    </ligand>
</feature>
<feature type="binding site" evidence="2">
    <location>
        <position position="58"/>
    </location>
    <ligand>
        <name>substrate</name>
    </ligand>
</feature>
<feature type="binding site" evidence="2">
    <location>
        <position position="139"/>
    </location>
    <ligand>
        <name>substrate</name>
    </ligand>
</feature>
<evidence type="ECO:0000250" key="1">
    <source>
        <dbReference type="UniProtKB" id="P62707"/>
    </source>
</evidence>
<evidence type="ECO:0000255" key="2"/>
<evidence type="ECO:0000269" key="3">
    <source>
    </source>
</evidence>
<evidence type="ECO:0000269" key="4">
    <source>
    </source>
</evidence>
<evidence type="ECO:0000305" key="5"/>
<organism>
    <name type="scientific">Bacillus subtilis (strain 168)</name>
    <dbReference type="NCBI Taxonomy" id="224308"/>
    <lineage>
        <taxon>Bacteria</taxon>
        <taxon>Bacillati</taxon>
        <taxon>Bacillota</taxon>
        <taxon>Bacilli</taxon>
        <taxon>Bacillales</taxon>
        <taxon>Bacillaceae</taxon>
        <taxon>Bacillus</taxon>
    </lineage>
</organism>